<proteinExistence type="inferred from homology"/>
<reference key="1">
    <citation type="journal article" date="2003" name="Nature">
        <title>Unique physiological and pathogenic features of Leptospira interrogans revealed by whole-genome sequencing.</title>
        <authorList>
            <person name="Ren S.-X."/>
            <person name="Fu G."/>
            <person name="Jiang X.-G."/>
            <person name="Zeng R."/>
            <person name="Miao Y.-G."/>
            <person name="Xu H."/>
            <person name="Zhang Y.-X."/>
            <person name="Xiong H."/>
            <person name="Lu G."/>
            <person name="Lu L.-F."/>
            <person name="Jiang H.-Q."/>
            <person name="Jia J."/>
            <person name="Tu Y.-F."/>
            <person name="Jiang J.-X."/>
            <person name="Gu W.-Y."/>
            <person name="Zhang Y.-Q."/>
            <person name="Cai Z."/>
            <person name="Sheng H.-H."/>
            <person name="Yin H.-F."/>
            <person name="Zhang Y."/>
            <person name="Zhu G.-F."/>
            <person name="Wan M."/>
            <person name="Huang H.-L."/>
            <person name="Qian Z."/>
            <person name="Wang S.-Y."/>
            <person name="Ma W."/>
            <person name="Yao Z.-J."/>
            <person name="Shen Y."/>
            <person name="Qiang B.-Q."/>
            <person name="Xia Q.-C."/>
            <person name="Guo X.-K."/>
            <person name="Danchin A."/>
            <person name="Saint Girons I."/>
            <person name="Somerville R.L."/>
            <person name="Wen Y.-M."/>
            <person name="Shi M.-H."/>
            <person name="Chen Z."/>
            <person name="Xu J.-G."/>
            <person name="Zhao G.-P."/>
        </authorList>
    </citation>
    <scope>NUCLEOTIDE SEQUENCE [LARGE SCALE GENOMIC DNA]</scope>
    <source>
        <strain>56601</strain>
    </source>
</reference>
<sequence>MYYNHKNVLDTEQFSKPDLDFLIGKIRVMERLVEQNKAFGILTGKLLASLFFEASTRTRLSFEAAMERLGGRVISTVGFQFSSISKGETLYDTMKMVEAYADIAVIRHPVEGSSRIAAGAVKIPVINAGDGAGQHPTQAILDLYTIISEKGTLDGLTVAFIGDLKYGRTIHSLINLLRHYKVRLFLISPPELALPESYKKALQGYSLTLEETTDIKAVWDCDVAYVTRIQEERFPDHKEYERLKDLFKINKELILASKKETTVLHPLPRVNELSTDVDDLPNAAYFRQARYGVVSRMTLLCLSLGQDF</sequence>
<evidence type="ECO:0000255" key="1">
    <source>
        <dbReference type="HAMAP-Rule" id="MF_00001"/>
    </source>
</evidence>
<evidence type="ECO:0000305" key="2"/>
<gene>
    <name evidence="1" type="primary">pyrB</name>
    <name type="ordered locus">LA_0778</name>
</gene>
<accession>Q8F812</accession>
<dbReference type="EC" id="2.1.3.2" evidence="1"/>
<dbReference type="EMBL" id="AE010300">
    <property type="protein sequence ID" value="AAN47977.1"/>
    <property type="status" value="ALT_INIT"/>
    <property type="molecule type" value="Genomic_DNA"/>
</dbReference>
<dbReference type="RefSeq" id="NP_710959.1">
    <property type="nucleotide sequence ID" value="NC_004342.2"/>
</dbReference>
<dbReference type="RefSeq" id="WP_002063873.1">
    <property type="nucleotide sequence ID" value="NC_004342.2"/>
</dbReference>
<dbReference type="SMR" id="Q8F812"/>
<dbReference type="FunCoup" id="Q8F812">
    <property type="interactions" value="500"/>
</dbReference>
<dbReference type="STRING" id="189518.LA_0778"/>
<dbReference type="PaxDb" id="189518-LA_0778"/>
<dbReference type="EnsemblBacteria" id="AAN47977">
    <property type="protein sequence ID" value="AAN47977"/>
    <property type="gene ID" value="LA_0778"/>
</dbReference>
<dbReference type="KEGG" id="lil:LA_0778"/>
<dbReference type="PATRIC" id="fig|189518.3.peg.784"/>
<dbReference type="HOGENOM" id="CLU_043846_1_2_12"/>
<dbReference type="InParanoid" id="Q8F812"/>
<dbReference type="OrthoDB" id="9802587at2"/>
<dbReference type="UniPathway" id="UPA00070">
    <property type="reaction ID" value="UER00116"/>
</dbReference>
<dbReference type="Proteomes" id="UP000001408">
    <property type="component" value="Chromosome I"/>
</dbReference>
<dbReference type="GO" id="GO:0005737">
    <property type="term" value="C:cytoplasm"/>
    <property type="evidence" value="ECO:0000318"/>
    <property type="project" value="GO_Central"/>
</dbReference>
<dbReference type="GO" id="GO:0016597">
    <property type="term" value="F:amino acid binding"/>
    <property type="evidence" value="ECO:0007669"/>
    <property type="project" value="InterPro"/>
</dbReference>
<dbReference type="GO" id="GO:0004070">
    <property type="term" value="F:aspartate carbamoyltransferase activity"/>
    <property type="evidence" value="ECO:0007669"/>
    <property type="project" value="UniProtKB-UniRule"/>
</dbReference>
<dbReference type="GO" id="GO:0006207">
    <property type="term" value="P:'de novo' pyrimidine nucleobase biosynthetic process"/>
    <property type="evidence" value="ECO:0007669"/>
    <property type="project" value="InterPro"/>
</dbReference>
<dbReference type="GO" id="GO:0044205">
    <property type="term" value="P:'de novo' UMP biosynthetic process"/>
    <property type="evidence" value="ECO:0007669"/>
    <property type="project" value="UniProtKB-UniRule"/>
</dbReference>
<dbReference type="GO" id="GO:0006541">
    <property type="term" value="P:glutamine metabolic process"/>
    <property type="evidence" value="ECO:0000318"/>
    <property type="project" value="GO_Central"/>
</dbReference>
<dbReference type="FunFam" id="3.40.50.1370:FF:000021">
    <property type="entry name" value="Aspartate carbamoyltransferase"/>
    <property type="match status" value="1"/>
</dbReference>
<dbReference type="Gene3D" id="3.40.50.1370">
    <property type="entry name" value="Aspartate/ornithine carbamoyltransferase"/>
    <property type="match status" value="2"/>
</dbReference>
<dbReference type="HAMAP" id="MF_00001">
    <property type="entry name" value="Asp_carb_tr"/>
    <property type="match status" value="1"/>
</dbReference>
<dbReference type="InterPro" id="IPR006132">
    <property type="entry name" value="Asp/Orn_carbamoyltranf_P-bd"/>
</dbReference>
<dbReference type="InterPro" id="IPR006130">
    <property type="entry name" value="Asp/Orn_carbamoylTrfase"/>
</dbReference>
<dbReference type="InterPro" id="IPR036901">
    <property type="entry name" value="Asp/Orn_carbamoylTrfase_sf"/>
</dbReference>
<dbReference type="InterPro" id="IPR002082">
    <property type="entry name" value="Asp_carbamoyltransf"/>
</dbReference>
<dbReference type="InterPro" id="IPR006131">
    <property type="entry name" value="Asp_carbamoyltransf_Asp/Orn-bd"/>
</dbReference>
<dbReference type="NCBIfam" id="TIGR00670">
    <property type="entry name" value="asp_carb_tr"/>
    <property type="match status" value="1"/>
</dbReference>
<dbReference type="NCBIfam" id="NF002032">
    <property type="entry name" value="PRK00856.1"/>
    <property type="match status" value="1"/>
</dbReference>
<dbReference type="PANTHER" id="PTHR45753:SF6">
    <property type="entry name" value="ASPARTATE CARBAMOYLTRANSFERASE"/>
    <property type="match status" value="1"/>
</dbReference>
<dbReference type="PANTHER" id="PTHR45753">
    <property type="entry name" value="ORNITHINE CARBAMOYLTRANSFERASE, MITOCHONDRIAL"/>
    <property type="match status" value="1"/>
</dbReference>
<dbReference type="Pfam" id="PF00185">
    <property type="entry name" value="OTCace"/>
    <property type="match status" value="1"/>
</dbReference>
<dbReference type="Pfam" id="PF02729">
    <property type="entry name" value="OTCace_N"/>
    <property type="match status" value="1"/>
</dbReference>
<dbReference type="PRINTS" id="PR00100">
    <property type="entry name" value="AOTCASE"/>
</dbReference>
<dbReference type="PRINTS" id="PR00101">
    <property type="entry name" value="ATCASE"/>
</dbReference>
<dbReference type="SUPFAM" id="SSF53671">
    <property type="entry name" value="Aspartate/ornithine carbamoyltransferase"/>
    <property type="match status" value="1"/>
</dbReference>
<dbReference type="PROSITE" id="PS00097">
    <property type="entry name" value="CARBAMOYLTRANSFERASE"/>
    <property type="match status" value="1"/>
</dbReference>
<feature type="chain" id="PRO_0000113154" description="Aspartate carbamoyltransferase catalytic subunit">
    <location>
        <begin position="1"/>
        <end position="308"/>
    </location>
</feature>
<feature type="binding site" evidence="1">
    <location>
        <position position="57"/>
    </location>
    <ligand>
        <name>carbamoyl phosphate</name>
        <dbReference type="ChEBI" id="CHEBI:58228"/>
    </ligand>
</feature>
<feature type="binding site" evidence="1">
    <location>
        <position position="58"/>
    </location>
    <ligand>
        <name>carbamoyl phosphate</name>
        <dbReference type="ChEBI" id="CHEBI:58228"/>
    </ligand>
</feature>
<feature type="binding site" evidence="1">
    <location>
        <position position="86"/>
    </location>
    <ligand>
        <name>L-aspartate</name>
        <dbReference type="ChEBI" id="CHEBI:29991"/>
    </ligand>
</feature>
<feature type="binding site" evidence="1">
    <location>
        <position position="107"/>
    </location>
    <ligand>
        <name>carbamoyl phosphate</name>
        <dbReference type="ChEBI" id="CHEBI:58228"/>
    </ligand>
</feature>
<feature type="binding site" evidence="1">
    <location>
        <position position="135"/>
    </location>
    <ligand>
        <name>carbamoyl phosphate</name>
        <dbReference type="ChEBI" id="CHEBI:58228"/>
    </ligand>
</feature>
<feature type="binding site" evidence="1">
    <location>
        <position position="138"/>
    </location>
    <ligand>
        <name>carbamoyl phosphate</name>
        <dbReference type="ChEBI" id="CHEBI:58228"/>
    </ligand>
</feature>
<feature type="binding site" evidence="1">
    <location>
        <position position="168"/>
    </location>
    <ligand>
        <name>L-aspartate</name>
        <dbReference type="ChEBI" id="CHEBI:29991"/>
    </ligand>
</feature>
<feature type="binding site" evidence="1">
    <location>
        <position position="228"/>
    </location>
    <ligand>
        <name>L-aspartate</name>
        <dbReference type="ChEBI" id="CHEBI:29991"/>
    </ligand>
</feature>
<feature type="binding site" evidence="1">
    <location>
        <position position="267"/>
    </location>
    <ligand>
        <name>carbamoyl phosphate</name>
        <dbReference type="ChEBI" id="CHEBI:58228"/>
    </ligand>
</feature>
<feature type="binding site" evidence="1">
    <location>
        <position position="268"/>
    </location>
    <ligand>
        <name>carbamoyl phosphate</name>
        <dbReference type="ChEBI" id="CHEBI:58228"/>
    </ligand>
</feature>
<protein>
    <recommendedName>
        <fullName evidence="1">Aspartate carbamoyltransferase catalytic subunit</fullName>
        <ecNumber evidence="1">2.1.3.2</ecNumber>
    </recommendedName>
    <alternativeName>
        <fullName evidence="1">Aspartate transcarbamylase</fullName>
        <shortName evidence="1">ATCase</shortName>
    </alternativeName>
</protein>
<comment type="function">
    <text evidence="1">Catalyzes the condensation of carbamoyl phosphate and aspartate to form carbamoyl aspartate and inorganic phosphate, the committed step in the de novo pyrimidine nucleotide biosynthesis pathway.</text>
</comment>
<comment type="catalytic activity">
    <reaction evidence="1">
        <text>carbamoyl phosphate + L-aspartate = N-carbamoyl-L-aspartate + phosphate + H(+)</text>
        <dbReference type="Rhea" id="RHEA:20013"/>
        <dbReference type="ChEBI" id="CHEBI:15378"/>
        <dbReference type="ChEBI" id="CHEBI:29991"/>
        <dbReference type="ChEBI" id="CHEBI:32814"/>
        <dbReference type="ChEBI" id="CHEBI:43474"/>
        <dbReference type="ChEBI" id="CHEBI:58228"/>
        <dbReference type="EC" id="2.1.3.2"/>
    </reaction>
</comment>
<comment type="pathway">
    <text evidence="1">Pyrimidine metabolism; UMP biosynthesis via de novo pathway; (S)-dihydroorotate from bicarbonate: step 2/3.</text>
</comment>
<comment type="subunit">
    <text evidence="1">Heterododecamer (2C3:3R2) of six catalytic PyrB chains organized as two trimers (C3), and six regulatory PyrI chains organized as three dimers (R2).</text>
</comment>
<comment type="similarity">
    <text evidence="1">Belongs to the aspartate/ornithine carbamoyltransferase superfamily. ATCase family.</text>
</comment>
<comment type="sequence caution" evidence="2">
    <conflict type="erroneous initiation">
        <sequence resource="EMBL-CDS" id="AAN47977"/>
    </conflict>
</comment>
<name>PYRB_LEPIN</name>
<organism>
    <name type="scientific">Leptospira interrogans serogroup Icterohaemorrhagiae serovar Lai (strain 56601)</name>
    <dbReference type="NCBI Taxonomy" id="189518"/>
    <lineage>
        <taxon>Bacteria</taxon>
        <taxon>Pseudomonadati</taxon>
        <taxon>Spirochaetota</taxon>
        <taxon>Spirochaetia</taxon>
        <taxon>Leptospirales</taxon>
        <taxon>Leptospiraceae</taxon>
        <taxon>Leptospira</taxon>
    </lineage>
</organism>
<keyword id="KW-0665">Pyrimidine biosynthesis</keyword>
<keyword id="KW-1185">Reference proteome</keyword>
<keyword id="KW-0808">Transferase</keyword>